<organism>
    <name type="scientific">Erwinia tasmaniensis (strain DSM 17950 / CFBP 7177 / CIP 109463 / NCPPB 4357 / Et1/99)</name>
    <dbReference type="NCBI Taxonomy" id="465817"/>
    <lineage>
        <taxon>Bacteria</taxon>
        <taxon>Pseudomonadati</taxon>
        <taxon>Pseudomonadota</taxon>
        <taxon>Gammaproteobacteria</taxon>
        <taxon>Enterobacterales</taxon>
        <taxon>Erwiniaceae</taxon>
        <taxon>Erwinia</taxon>
    </lineage>
</organism>
<sequence>MTDQPQQLTIRRPDDWHIHLRDGEMLEAVAPFTSEICGRAIVMPNLVPPVTSVAAARAYRERIVAAVPAAHDFTPLMTCYLTDGLDPDEIEAGFAEGVFTAAKLYPAHATTNSAHGVTSIASIAKVLERMQKIGMPLLIHGEVTDAHIDIFDREARFIETVLHPLRQQFPELKVVCEHITTQEAAAYVLEGNQYLAATITPQHLMFNRNHMLVGGIRPHLYCLPILKRNIHQQALRDAVASGHRRFFLGTDTAPHTRDRKETSCGCAGVFNAPSMLSAYATVFEEIGALAHFEAFCSENGPGFYGLPLNEDKVRLIRQPWTVPESIRVGGNGDNLVPFLAGETLNWQVVL</sequence>
<evidence type="ECO:0000255" key="1">
    <source>
        <dbReference type="HAMAP-Rule" id="MF_00219"/>
    </source>
</evidence>
<proteinExistence type="inferred from homology"/>
<comment type="function">
    <text evidence="1">Catalyzes the reversible cyclization of carbamoyl aspartate to dihydroorotate.</text>
</comment>
<comment type="catalytic activity">
    <reaction evidence="1">
        <text>(S)-dihydroorotate + H2O = N-carbamoyl-L-aspartate + H(+)</text>
        <dbReference type="Rhea" id="RHEA:24296"/>
        <dbReference type="ChEBI" id="CHEBI:15377"/>
        <dbReference type="ChEBI" id="CHEBI:15378"/>
        <dbReference type="ChEBI" id="CHEBI:30864"/>
        <dbReference type="ChEBI" id="CHEBI:32814"/>
        <dbReference type="EC" id="3.5.2.3"/>
    </reaction>
</comment>
<comment type="cofactor">
    <cofactor evidence="1">
        <name>Zn(2+)</name>
        <dbReference type="ChEBI" id="CHEBI:29105"/>
    </cofactor>
    <text evidence="1">Binds 2 Zn(2+) ions per subunit.</text>
</comment>
<comment type="pathway">
    <text evidence="1">Pyrimidine metabolism; UMP biosynthesis via de novo pathway; (S)-dihydroorotate from bicarbonate: step 3/3.</text>
</comment>
<comment type="subunit">
    <text evidence="1">Homodimer.</text>
</comment>
<comment type="similarity">
    <text evidence="1">Belongs to the metallo-dependent hydrolases superfamily. DHOase family. Class II DHOase subfamily.</text>
</comment>
<protein>
    <recommendedName>
        <fullName evidence="1">Dihydroorotase</fullName>
        <shortName evidence="1">DHOase</shortName>
        <ecNumber evidence="1">3.5.2.3</ecNumber>
    </recommendedName>
</protein>
<feature type="chain" id="PRO_1000100044" description="Dihydroorotase">
    <location>
        <begin position="1"/>
        <end position="350"/>
    </location>
</feature>
<feature type="active site" evidence="1">
    <location>
        <position position="251"/>
    </location>
</feature>
<feature type="binding site" evidence="1">
    <location>
        <position position="17"/>
    </location>
    <ligand>
        <name>Zn(2+)</name>
        <dbReference type="ChEBI" id="CHEBI:29105"/>
        <label>1</label>
    </ligand>
</feature>
<feature type="binding site" evidence="1">
    <location>
        <begin position="19"/>
        <end position="21"/>
    </location>
    <ligand>
        <name>substrate</name>
    </ligand>
</feature>
<feature type="binding site" evidence="1">
    <location>
        <position position="19"/>
    </location>
    <ligand>
        <name>Zn(2+)</name>
        <dbReference type="ChEBI" id="CHEBI:29105"/>
        <label>1</label>
    </ligand>
</feature>
<feature type="binding site" evidence="1">
    <location>
        <position position="45"/>
    </location>
    <ligand>
        <name>substrate</name>
    </ligand>
</feature>
<feature type="binding site" description="via carbamate group" evidence="1">
    <location>
        <position position="103"/>
    </location>
    <ligand>
        <name>Zn(2+)</name>
        <dbReference type="ChEBI" id="CHEBI:29105"/>
        <label>1</label>
    </ligand>
</feature>
<feature type="binding site" description="via carbamate group" evidence="1">
    <location>
        <position position="103"/>
    </location>
    <ligand>
        <name>Zn(2+)</name>
        <dbReference type="ChEBI" id="CHEBI:29105"/>
        <label>2</label>
    </ligand>
</feature>
<feature type="binding site" evidence="1">
    <location>
        <position position="140"/>
    </location>
    <ligand>
        <name>substrate</name>
    </ligand>
</feature>
<feature type="binding site" evidence="1">
    <location>
        <position position="140"/>
    </location>
    <ligand>
        <name>Zn(2+)</name>
        <dbReference type="ChEBI" id="CHEBI:29105"/>
        <label>2</label>
    </ligand>
</feature>
<feature type="binding site" evidence="1">
    <location>
        <position position="178"/>
    </location>
    <ligand>
        <name>Zn(2+)</name>
        <dbReference type="ChEBI" id="CHEBI:29105"/>
        <label>2</label>
    </ligand>
</feature>
<feature type="binding site" evidence="1">
    <location>
        <position position="223"/>
    </location>
    <ligand>
        <name>substrate</name>
    </ligand>
</feature>
<feature type="binding site" evidence="1">
    <location>
        <position position="251"/>
    </location>
    <ligand>
        <name>Zn(2+)</name>
        <dbReference type="ChEBI" id="CHEBI:29105"/>
        <label>1</label>
    </ligand>
</feature>
<feature type="binding site" evidence="1">
    <location>
        <position position="255"/>
    </location>
    <ligand>
        <name>substrate</name>
    </ligand>
</feature>
<feature type="binding site" evidence="1">
    <location>
        <position position="267"/>
    </location>
    <ligand>
        <name>substrate</name>
    </ligand>
</feature>
<feature type="modified residue" description="N6-carboxylysine" evidence="1">
    <location>
        <position position="103"/>
    </location>
</feature>
<gene>
    <name evidence="1" type="primary">pyrC</name>
    <name type="ordered locus">ETA_20520</name>
</gene>
<accession>B2VDJ8</accession>
<reference key="1">
    <citation type="journal article" date="2008" name="Environ. Microbiol.">
        <title>The genome of Erwinia tasmaniensis strain Et1/99, a non-pathogenic bacterium in the genus Erwinia.</title>
        <authorList>
            <person name="Kube M."/>
            <person name="Migdoll A.M."/>
            <person name="Mueller I."/>
            <person name="Kuhl H."/>
            <person name="Beck A."/>
            <person name="Reinhardt R."/>
            <person name="Geider K."/>
        </authorList>
    </citation>
    <scope>NUCLEOTIDE SEQUENCE [LARGE SCALE GENOMIC DNA]</scope>
    <source>
        <strain>DSM 17950 / CFBP 7177 / CIP 109463 / NCPPB 4357 / Et1/99</strain>
    </source>
</reference>
<dbReference type="EC" id="3.5.2.3" evidence="1"/>
<dbReference type="EMBL" id="CU468135">
    <property type="protein sequence ID" value="CAO97098.1"/>
    <property type="molecule type" value="Genomic_DNA"/>
</dbReference>
<dbReference type="RefSeq" id="WP_012441772.1">
    <property type="nucleotide sequence ID" value="NC_010694.1"/>
</dbReference>
<dbReference type="SMR" id="B2VDJ8"/>
<dbReference type="STRING" id="465817.ETA_20520"/>
<dbReference type="MEROPS" id="M38.A02"/>
<dbReference type="KEGG" id="eta:ETA_20520"/>
<dbReference type="eggNOG" id="COG0418">
    <property type="taxonomic scope" value="Bacteria"/>
</dbReference>
<dbReference type="HOGENOM" id="CLU_041558_1_0_6"/>
<dbReference type="OrthoDB" id="9808095at2"/>
<dbReference type="UniPathway" id="UPA00070">
    <property type="reaction ID" value="UER00117"/>
</dbReference>
<dbReference type="Proteomes" id="UP000001726">
    <property type="component" value="Chromosome"/>
</dbReference>
<dbReference type="GO" id="GO:0005829">
    <property type="term" value="C:cytosol"/>
    <property type="evidence" value="ECO:0007669"/>
    <property type="project" value="TreeGrafter"/>
</dbReference>
<dbReference type="GO" id="GO:0004151">
    <property type="term" value="F:dihydroorotase activity"/>
    <property type="evidence" value="ECO:0007669"/>
    <property type="project" value="UniProtKB-UniRule"/>
</dbReference>
<dbReference type="GO" id="GO:0008270">
    <property type="term" value="F:zinc ion binding"/>
    <property type="evidence" value="ECO:0007669"/>
    <property type="project" value="UniProtKB-UniRule"/>
</dbReference>
<dbReference type="GO" id="GO:0006207">
    <property type="term" value="P:'de novo' pyrimidine nucleobase biosynthetic process"/>
    <property type="evidence" value="ECO:0007669"/>
    <property type="project" value="TreeGrafter"/>
</dbReference>
<dbReference type="GO" id="GO:0044205">
    <property type="term" value="P:'de novo' UMP biosynthetic process"/>
    <property type="evidence" value="ECO:0007669"/>
    <property type="project" value="UniProtKB-UniRule"/>
</dbReference>
<dbReference type="CDD" id="cd01294">
    <property type="entry name" value="DHOase"/>
    <property type="match status" value="1"/>
</dbReference>
<dbReference type="FunFam" id="3.20.20.140:FF:000006">
    <property type="entry name" value="Dihydroorotase"/>
    <property type="match status" value="1"/>
</dbReference>
<dbReference type="Gene3D" id="3.20.20.140">
    <property type="entry name" value="Metal-dependent hydrolases"/>
    <property type="match status" value="1"/>
</dbReference>
<dbReference type="HAMAP" id="MF_00219">
    <property type="entry name" value="PyrC_classII"/>
    <property type="match status" value="1"/>
</dbReference>
<dbReference type="InterPro" id="IPR006680">
    <property type="entry name" value="Amidohydro-rel"/>
</dbReference>
<dbReference type="InterPro" id="IPR004721">
    <property type="entry name" value="DHOdimr"/>
</dbReference>
<dbReference type="InterPro" id="IPR002195">
    <property type="entry name" value="Dihydroorotase_CS"/>
</dbReference>
<dbReference type="InterPro" id="IPR032466">
    <property type="entry name" value="Metal_Hydrolase"/>
</dbReference>
<dbReference type="NCBIfam" id="TIGR00856">
    <property type="entry name" value="pyrC_dimer"/>
    <property type="match status" value="1"/>
</dbReference>
<dbReference type="PANTHER" id="PTHR43137">
    <property type="entry name" value="DIHYDROOROTASE"/>
    <property type="match status" value="1"/>
</dbReference>
<dbReference type="PANTHER" id="PTHR43137:SF1">
    <property type="entry name" value="DIHYDROOROTASE"/>
    <property type="match status" value="1"/>
</dbReference>
<dbReference type="Pfam" id="PF01979">
    <property type="entry name" value="Amidohydro_1"/>
    <property type="match status" value="1"/>
</dbReference>
<dbReference type="PIRSF" id="PIRSF001237">
    <property type="entry name" value="DHOdimr"/>
    <property type="match status" value="1"/>
</dbReference>
<dbReference type="SUPFAM" id="SSF51556">
    <property type="entry name" value="Metallo-dependent hydrolases"/>
    <property type="match status" value="1"/>
</dbReference>
<dbReference type="PROSITE" id="PS00482">
    <property type="entry name" value="DIHYDROOROTASE_1"/>
    <property type="match status" value="1"/>
</dbReference>
<dbReference type="PROSITE" id="PS00483">
    <property type="entry name" value="DIHYDROOROTASE_2"/>
    <property type="match status" value="1"/>
</dbReference>
<keyword id="KW-0378">Hydrolase</keyword>
<keyword id="KW-0479">Metal-binding</keyword>
<keyword id="KW-0665">Pyrimidine biosynthesis</keyword>
<keyword id="KW-1185">Reference proteome</keyword>
<keyword id="KW-0862">Zinc</keyword>
<name>PYRC_ERWT9</name>